<gene>
    <name type="primary">INPP4B</name>
</gene>
<keyword id="KW-0025">Alternative splicing</keyword>
<keyword id="KW-0378">Hydrolase</keyword>
<keyword id="KW-0443">Lipid metabolism</keyword>
<keyword id="KW-1185">Reference proteome</keyword>
<reference key="1">
    <citation type="submission" date="2004-11" db="EMBL/GenBank/DDBJ databases">
        <authorList>
            <consortium name="The German cDNA consortium"/>
        </authorList>
    </citation>
    <scope>NUCLEOTIDE SEQUENCE [LARGE SCALE MRNA] (ISOFORMS 1 AND 2)</scope>
    <source>
        <tissue>Brain cortex</tissue>
    </source>
</reference>
<comment type="function">
    <text evidence="1 2">Catalyzes the hydrolysis of the 4-position phosphate of phosphatidylinositol 3,4-bisphosphate, inositol 1,3,4-trisphosphate and inositol 3,4-bisphosphate (By similarity). Plays a role in the late stages of macropinocytosis by dephosphorylating phosphatidylinositol 3,4-bisphosphate in membrane ruffles (By similarity). Antagonizes the PI3K-AKT/PKB signaling pathway by dephosphorylating phosphoinositides and thereby modulating cell cycle progression and cell survival (By similarity).</text>
</comment>
<comment type="catalytic activity">
    <reaction evidence="2">
        <text>a 1,2-diacyl-sn-glycero-3-phospho-(1D-myo-inositol-3,4-bisphosphate) + H2O = a 1,2-diacyl-sn-glycero-3-phospho-(1D-myo-inositol-3-phosphate) + phosphate</text>
        <dbReference type="Rhea" id="RHEA:17193"/>
        <dbReference type="ChEBI" id="CHEBI:15377"/>
        <dbReference type="ChEBI" id="CHEBI:43474"/>
        <dbReference type="ChEBI" id="CHEBI:57658"/>
        <dbReference type="ChEBI" id="CHEBI:58088"/>
        <dbReference type="EC" id="3.1.3.66"/>
    </reaction>
</comment>
<comment type="catalytic activity">
    <reaction evidence="1">
        <text>1D-myo-inositol 1,3,4-trisphosphate + H2O = 1D-myo-inositol 1,3-bisphosphate + phosphate</text>
        <dbReference type="Rhea" id="RHEA:43392"/>
        <dbReference type="ChEBI" id="CHEBI:15377"/>
        <dbReference type="ChEBI" id="CHEBI:43474"/>
        <dbReference type="ChEBI" id="CHEBI:58414"/>
        <dbReference type="ChEBI" id="CHEBI:83242"/>
    </reaction>
</comment>
<comment type="catalytic activity">
    <reaction evidence="2">
        <text>1D-myo-inositol 3,4-bisphosphate + H2O = 1D-myo-inositol 3-phosphate + phosphate</text>
        <dbReference type="Rhea" id="RHEA:43388"/>
        <dbReference type="ChEBI" id="CHEBI:15377"/>
        <dbReference type="ChEBI" id="CHEBI:43474"/>
        <dbReference type="ChEBI" id="CHEBI:58401"/>
        <dbReference type="ChEBI" id="CHEBI:83241"/>
    </reaction>
</comment>
<comment type="activity regulation">
    <text evidence="2">Strongly inhibited by inositol hexakisphosphate.</text>
</comment>
<comment type="pathway">
    <text evidence="2">Signal transduction; phosphatidylinositol signaling pathway.</text>
</comment>
<comment type="alternative products">
    <event type="alternative splicing"/>
    <isoform>
        <id>Q5RA60-1</id>
        <name>1</name>
        <sequence type="displayed"/>
    </isoform>
    <isoform>
        <id>Q5RA60-2</id>
        <name>2</name>
        <sequence type="described" ref="VSP_015248"/>
    </isoform>
</comment>
<comment type="similarity">
    <text evidence="6">Belongs to the inositol 3,4-bisphosphate 4-phosphatase family.</text>
</comment>
<sequence length="924" mass="104713">MEIKEEGASEEGQHFLPTAQASDPGDCQFTSIQKTPNEPQLEFILACKDLVAPVRDRKLNTLVQISVIHPVEQSLTRYSSTEIVEGTRDPLFLTGVTFPSEYPIYEETKIKLTVYDVKDKSHDTVRTSVLPEHKDSPPEIGRSFLGYASFKVGELLKSKEQLLVLSLRTSDGGKVVGTIEVSVVKMGEIEDGEADHITTDIQGQKCALVCECTAPESVSGKDNLPFLNSVLKNPVCKLYRFPTSDNKWMRIREQMSESILSFHIPKELISLHIKEDLCRNQEIKELGELSPHWDNLRKNVLTHCDQMVNMYQDILTELSKETGSSFKSSSSKGDKTLEFVPINLHLQRMQVHSPHLKDALYDVITVGAPAAHFQGFKNGGLRKLLHRFETERRNTGYQFIYYSPENTAKAKEVLSNINQLQPLIATHADLLLNSASQHSPDSLKNSLKMLSEKTELFVHAFKDQLVRSALLALYTARPGGILKKPPSPKSSTEESSPQDQPPLMRGQDSIPHHSDYDEEEWDRVWANVGKSLNCIIAMVDKLIERDGGSEGSGGNNDGEKEPSLADAIPSHPREDWYEQLYPLILTLKDCMGEVVNRAKQSLTFVLLQELAYSLPQCLMLTLRRDVVFSQALAGLVCGFIIKLQTSLYDPGFLRQLHTVGLIVQYEGLLSTYSDEIGMLEDMAVGISDLKKVAFKIIEAKSNDVLPVITGRREHYVVEVKLPARMFESLPLQIKEGQLLHVYPVLFNVGINEQQTLAERFGDVSLQESINQENFELLQEYYKIFMEKMPPDYISHFQEQNDLKALLENLLQNIQSKKRKNVEIMWLAATICRKLNGIRFTCCKSAKDRTSMSVTLEQCSILRDEHQLHKDFFIRALDCMRREGCRIENVLKNIKCRKYAFNMLQLMAFPKYYRPPEGTYGKADT</sequence>
<accession>Q5RA60</accession>
<accession>Q5RCA1</accession>
<protein>
    <recommendedName>
        <fullName>Type II inositol 3,4-bisphosphate 4-phosphatase</fullName>
        <ecNumber evidence="2">3.1.3.66</ecNumber>
    </recommendedName>
    <alternativeName>
        <fullName>Inositol polyphosphate 4-phosphatase type II</fullName>
    </alternativeName>
</protein>
<organism>
    <name type="scientific">Pongo abelii</name>
    <name type="common">Sumatran orangutan</name>
    <name type="synonym">Pongo pygmaeus abelii</name>
    <dbReference type="NCBI Taxonomy" id="9601"/>
    <lineage>
        <taxon>Eukaryota</taxon>
        <taxon>Metazoa</taxon>
        <taxon>Chordata</taxon>
        <taxon>Craniata</taxon>
        <taxon>Vertebrata</taxon>
        <taxon>Euteleostomi</taxon>
        <taxon>Mammalia</taxon>
        <taxon>Eutheria</taxon>
        <taxon>Euarchontoglires</taxon>
        <taxon>Primates</taxon>
        <taxon>Haplorrhini</taxon>
        <taxon>Catarrhini</taxon>
        <taxon>Hominidae</taxon>
        <taxon>Pongo</taxon>
    </lineage>
</organism>
<feature type="chain" id="PRO_0000190238" description="Type II inositol 3,4-bisphosphate 4-phosphatase">
    <location>
        <begin position="1"/>
        <end position="924"/>
    </location>
</feature>
<feature type="domain" description="C2" evidence="3">
    <location>
        <begin position="23"/>
        <end position="165"/>
    </location>
</feature>
<feature type="region of interest" description="Disordered" evidence="4">
    <location>
        <begin position="1"/>
        <end position="25"/>
    </location>
</feature>
<feature type="region of interest" description="Disordered" evidence="4">
    <location>
        <begin position="481"/>
        <end position="516"/>
    </location>
</feature>
<feature type="region of interest" description="Disordered" evidence="4">
    <location>
        <begin position="546"/>
        <end position="569"/>
    </location>
</feature>
<feature type="compositionally biased region" description="Basic and acidic residues" evidence="4">
    <location>
        <begin position="1"/>
        <end position="13"/>
    </location>
</feature>
<feature type="splice variant" id="VSP_015248" description="In isoform 2." evidence="5">
    <original>REGCRIENVLKNIKCRKYAFNMLQLMAFPKYYRPPEGTYGKADT</original>
    <variation>SRQTQGALNESDDPETGCLTDNKPTSRHFYPVALLLVSSHLLVVWLILSLALLLAKYQ</variation>
    <location>
        <begin position="881"/>
        <end position="924"/>
    </location>
</feature>
<feature type="sequence conflict" description="In Ref. 1; CAH90606." evidence="6" ref="1">
    <original>P</original>
    <variation>L</variation>
    <location>
        <position position="137"/>
    </location>
</feature>
<feature type="sequence conflict" description="In Ref. 1; CAH90606." evidence="6" ref="1">
    <original>R</original>
    <variation>Q</variation>
    <location>
        <position position="654"/>
    </location>
</feature>
<feature type="sequence conflict" description="In Ref. 1; CAH90606." evidence="6" ref="1">
    <original>A</original>
    <variation>V</variation>
    <location>
        <position position="683"/>
    </location>
</feature>
<feature type="sequence conflict" description="In Ref. 1; CAH90606." evidence="6" ref="1">
    <original>V</original>
    <variation>A</variation>
    <location>
        <position position="719"/>
    </location>
</feature>
<name>INP4B_PONAB</name>
<dbReference type="EC" id="3.1.3.66" evidence="2"/>
<dbReference type="EMBL" id="CR858378">
    <property type="protein sequence ID" value="CAH90606.1"/>
    <property type="molecule type" value="mRNA"/>
</dbReference>
<dbReference type="EMBL" id="CR859161">
    <property type="protein sequence ID" value="CAH91350.1"/>
    <property type="molecule type" value="mRNA"/>
</dbReference>
<dbReference type="RefSeq" id="NP_001127308.1">
    <property type="nucleotide sequence ID" value="NM_001133836.1"/>
</dbReference>
<dbReference type="SMR" id="Q5RA60"/>
<dbReference type="FunCoup" id="Q5RA60">
    <property type="interactions" value="1352"/>
</dbReference>
<dbReference type="STRING" id="9601.ENSPPYP00000016852"/>
<dbReference type="GeneID" id="100174369"/>
<dbReference type="KEGG" id="pon:100174369"/>
<dbReference type="CTD" id="8821"/>
<dbReference type="eggNOG" id="KOG4428">
    <property type="taxonomic scope" value="Eukaryota"/>
</dbReference>
<dbReference type="InParanoid" id="Q5RA60"/>
<dbReference type="OrthoDB" id="159395at2759"/>
<dbReference type="UniPathway" id="UPA00944"/>
<dbReference type="Proteomes" id="UP000001595">
    <property type="component" value="Unplaced"/>
</dbReference>
<dbReference type="GO" id="GO:0005737">
    <property type="term" value="C:cytoplasm"/>
    <property type="evidence" value="ECO:0007669"/>
    <property type="project" value="TreeGrafter"/>
</dbReference>
<dbReference type="GO" id="GO:0017161">
    <property type="term" value="F:inositol-1,3,4-trisphosphate 4-phosphatase activity"/>
    <property type="evidence" value="ECO:0007669"/>
    <property type="project" value="RHEA"/>
</dbReference>
<dbReference type="GO" id="GO:0052828">
    <property type="term" value="F:inositol-3,4-bisphosphate 4-phosphatase activity"/>
    <property type="evidence" value="ECO:0007669"/>
    <property type="project" value="RHEA"/>
</dbReference>
<dbReference type="GO" id="GO:0016316">
    <property type="term" value="F:phosphatidylinositol-3,4-bisphosphate 4-phosphatase activity"/>
    <property type="evidence" value="ECO:0007669"/>
    <property type="project" value="UniProtKB-EC"/>
</dbReference>
<dbReference type="CDD" id="cd04048">
    <property type="entry name" value="C2A_Copine"/>
    <property type="match status" value="1"/>
</dbReference>
<dbReference type="FunFam" id="2.60.40.150:FF:000143">
    <property type="entry name" value="Type II inositol 3,4-bisphosphate 4-phosphatase"/>
    <property type="match status" value="1"/>
</dbReference>
<dbReference type="Gene3D" id="6.10.250.230">
    <property type="match status" value="1"/>
</dbReference>
<dbReference type="Gene3D" id="2.60.40.150">
    <property type="entry name" value="C2 domain"/>
    <property type="match status" value="1"/>
</dbReference>
<dbReference type="InterPro" id="IPR000008">
    <property type="entry name" value="C2_dom"/>
</dbReference>
<dbReference type="InterPro" id="IPR035892">
    <property type="entry name" value="C2_domain_sf"/>
</dbReference>
<dbReference type="InterPro" id="IPR039034">
    <property type="entry name" value="INPP4"/>
</dbReference>
<dbReference type="PANTHER" id="PTHR12187">
    <property type="entry name" value="AGAP000124-PA"/>
    <property type="match status" value="1"/>
</dbReference>
<dbReference type="PANTHER" id="PTHR12187:SF3">
    <property type="entry name" value="INOSITOL POLYPHOSPHATE 4-PHOSPHATASE TYPE II"/>
    <property type="match status" value="1"/>
</dbReference>
<dbReference type="SUPFAM" id="SSF49562">
    <property type="entry name" value="C2 domain (Calcium/lipid-binding domain, CaLB)"/>
    <property type="match status" value="1"/>
</dbReference>
<dbReference type="PROSITE" id="PS50004">
    <property type="entry name" value="C2"/>
    <property type="match status" value="1"/>
</dbReference>
<proteinExistence type="evidence at transcript level"/>
<evidence type="ECO:0000250" key="1">
    <source>
        <dbReference type="UniProtKB" id="O15327"/>
    </source>
</evidence>
<evidence type="ECO:0000250" key="2">
    <source>
        <dbReference type="UniProtKB" id="Q9QWG5"/>
    </source>
</evidence>
<evidence type="ECO:0000255" key="3">
    <source>
        <dbReference type="PROSITE-ProRule" id="PRU00041"/>
    </source>
</evidence>
<evidence type="ECO:0000256" key="4">
    <source>
        <dbReference type="SAM" id="MobiDB-lite"/>
    </source>
</evidence>
<evidence type="ECO:0000303" key="5">
    <source ref="1"/>
</evidence>
<evidence type="ECO:0000305" key="6"/>